<feature type="chain" id="PRO_0000099030" description="Tryptophan synthase beta chain 1">
    <location>
        <begin position="1"/>
        <end position="427"/>
    </location>
</feature>
<feature type="modified residue" description="N6-(pyridoxal phosphate)lysine" evidence="1">
    <location>
        <position position="107"/>
    </location>
</feature>
<reference key="1">
    <citation type="journal article" date="1999" name="DNA Res.">
        <title>Complete genome sequence of an aerobic hyper-thermophilic crenarchaeon, Aeropyrum pernix K1.</title>
        <authorList>
            <person name="Kawarabayasi Y."/>
            <person name="Hino Y."/>
            <person name="Horikawa H."/>
            <person name="Yamazaki S."/>
            <person name="Haikawa Y."/>
            <person name="Jin-no K."/>
            <person name="Takahashi M."/>
            <person name="Sekine M."/>
            <person name="Baba S."/>
            <person name="Ankai A."/>
            <person name="Kosugi H."/>
            <person name="Hosoyama A."/>
            <person name="Fukui S."/>
            <person name="Nagai Y."/>
            <person name="Nishijima K."/>
            <person name="Nakazawa H."/>
            <person name="Takamiya M."/>
            <person name="Masuda S."/>
            <person name="Funahashi T."/>
            <person name="Tanaka T."/>
            <person name="Kudoh Y."/>
            <person name="Yamazaki J."/>
            <person name="Kushida N."/>
            <person name="Oguchi A."/>
            <person name="Aoki K."/>
            <person name="Kubota K."/>
            <person name="Nakamura Y."/>
            <person name="Nomura N."/>
            <person name="Sako Y."/>
            <person name="Kikuchi H."/>
        </authorList>
    </citation>
    <scope>NUCLEOTIDE SEQUENCE [LARGE SCALE GENOMIC DNA]</scope>
    <source>
        <strain>ATCC 700893 / DSM 11879 / JCM 9820 / NBRC 100138 / K1</strain>
    </source>
</reference>
<sequence length="427" mass="45992">MVSVPLRWYNIAADLPEPLPPLRDPEGLREESRIALLSRILPSRLIEDEYILARWVDIPGEVRKALARIGRPTPLIRAEGLEKVLGVKGRVRIYYKSEAVLPTGSHKINTAIAQAYYAKLDGAKEIVTETGAGQWGLAASTAAALMGLKATVFMTASSFKSKIQRRLLMEAQGARVISSPSKLTDTGREALEEYGSTHPGSLGLAIAEAVEYTLESGDRRYLPGSVLEAVLMHQTVIGLEALDQLPEEPDVVVACVGGGSNFGGFTYPMIGARLRGEGFEKTRFIAAESTAAPKLTRGEYRYDGLDSSLILPLAKMYTLGHRYTPPPSHAAGLRYHGVSPSLSILRRLGLVEAEAIPQEEALASILLMARSEGVVPAPESSHAVALAARIARKLPDGSVVAFNLSGHGLLDLDALQKALEIRGASMW</sequence>
<name>TRPB1_AERPE</name>
<proteinExistence type="inferred from homology"/>
<keyword id="KW-0028">Amino-acid biosynthesis</keyword>
<keyword id="KW-0057">Aromatic amino acid biosynthesis</keyword>
<keyword id="KW-0456">Lyase</keyword>
<keyword id="KW-0663">Pyridoxal phosphate</keyword>
<keyword id="KW-1185">Reference proteome</keyword>
<keyword id="KW-0822">Tryptophan biosynthesis</keyword>
<evidence type="ECO:0000250" key="1"/>
<evidence type="ECO:0000305" key="2"/>
<gene>
    <name type="primary">trpB1</name>
    <name type="ordered locus">APE_2548</name>
</gene>
<accession>Q9Y8T5</accession>
<comment type="function">
    <text evidence="1">The beta subunit is responsible for the synthesis of L-tryptophan from indole and L-serine.</text>
</comment>
<comment type="catalytic activity">
    <reaction>
        <text>(1S,2R)-1-C-(indol-3-yl)glycerol 3-phosphate + L-serine = D-glyceraldehyde 3-phosphate + L-tryptophan + H2O</text>
        <dbReference type="Rhea" id="RHEA:10532"/>
        <dbReference type="ChEBI" id="CHEBI:15377"/>
        <dbReference type="ChEBI" id="CHEBI:33384"/>
        <dbReference type="ChEBI" id="CHEBI:57912"/>
        <dbReference type="ChEBI" id="CHEBI:58866"/>
        <dbReference type="ChEBI" id="CHEBI:59776"/>
        <dbReference type="EC" id="4.2.1.20"/>
    </reaction>
</comment>
<comment type="cofactor">
    <cofactor evidence="1">
        <name>pyridoxal 5'-phosphate</name>
        <dbReference type="ChEBI" id="CHEBI:597326"/>
    </cofactor>
</comment>
<comment type="pathway">
    <text>Amino-acid biosynthesis; L-tryptophan biosynthesis; L-tryptophan from chorismate: step 5/5.</text>
</comment>
<comment type="subunit">
    <text evidence="1">Tetramer of two alpha and two beta chains.</text>
</comment>
<comment type="similarity">
    <text evidence="2">Belongs to the TrpB family.</text>
</comment>
<organism>
    <name type="scientific">Aeropyrum pernix (strain ATCC 700893 / DSM 11879 / JCM 9820 / NBRC 100138 / K1)</name>
    <dbReference type="NCBI Taxonomy" id="272557"/>
    <lineage>
        <taxon>Archaea</taxon>
        <taxon>Thermoproteota</taxon>
        <taxon>Thermoprotei</taxon>
        <taxon>Desulfurococcales</taxon>
        <taxon>Desulfurococcaceae</taxon>
        <taxon>Aeropyrum</taxon>
    </lineage>
</organism>
<protein>
    <recommendedName>
        <fullName>Tryptophan synthase beta chain 1</fullName>
        <ecNumber>4.2.1.20</ecNumber>
    </recommendedName>
</protein>
<dbReference type="EC" id="4.2.1.20"/>
<dbReference type="EMBL" id="BA000002">
    <property type="protein sequence ID" value="BAA81565.1"/>
    <property type="molecule type" value="Genomic_DNA"/>
</dbReference>
<dbReference type="PIR" id="E72488">
    <property type="entry name" value="E72488"/>
</dbReference>
<dbReference type="RefSeq" id="WP_010867078.1">
    <property type="nucleotide sequence ID" value="NC_000854.2"/>
</dbReference>
<dbReference type="SMR" id="Q9Y8T5"/>
<dbReference type="STRING" id="272557.APE_2548"/>
<dbReference type="EnsemblBacteria" id="BAA81565">
    <property type="protein sequence ID" value="BAA81565"/>
    <property type="gene ID" value="APE_2548"/>
</dbReference>
<dbReference type="GeneID" id="1445494"/>
<dbReference type="KEGG" id="ape:APE_2548"/>
<dbReference type="PATRIC" id="fig|272557.25.peg.1692"/>
<dbReference type="eggNOG" id="arCOG01432">
    <property type="taxonomic scope" value="Archaea"/>
</dbReference>
<dbReference type="UniPathway" id="UPA00035">
    <property type="reaction ID" value="UER00044"/>
</dbReference>
<dbReference type="Proteomes" id="UP000002518">
    <property type="component" value="Chromosome"/>
</dbReference>
<dbReference type="GO" id="GO:0005737">
    <property type="term" value="C:cytoplasm"/>
    <property type="evidence" value="ECO:0007669"/>
    <property type="project" value="TreeGrafter"/>
</dbReference>
<dbReference type="GO" id="GO:0052684">
    <property type="term" value="F:L-serine hydro-lyase (adding indole, L-tryptophan-forming) activity"/>
    <property type="evidence" value="ECO:0007669"/>
    <property type="project" value="TreeGrafter"/>
</dbReference>
<dbReference type="GO" id="GO:0030170">
    <property type="term" value="F:pyridoxal phosphate binding"/>
    <property type="evidence" value="ECO:0007669"/>
    <property type="project" value="InterPro"/>
</dbReference>
<dbReference type="GO" id="GO:0004834">
    <property type="term" value="F:tryptophan synthase activity"/>
    <property type="evidence" value="ECO:0007669"/>
    <property type="project" value="UniProtKB-UniRule"/>
</dbReference>
<dbReference type="Gene3D" id="3.40.50.1100">
    <property type="match status" value="2"/>
</dbReference>
<dbReference type="HAMAP" id="MF_00133">
    <property type="entry name" value="Trp_synth_beta"/>
    <property type="match status" value="1"/>
</dbReference>
<dbReference type="InterPro" id="IPR006316">
    <property type="entry name" value="Trp_synth_b-like"/>
</dbReference>
<dbReference type="InterPro" id="IPR006653">
    <property type="entry name" value="Trp_synth_b_CS"/>
</dbReference>
<dbReference type="InterPro" id="IPR023026">
    <property type="entry name" value="Trp_synth_beta/beta-like"/>
</dbReference>
<dbReference type="InterPro" id="IPR001926">
    <property type="entry name" value="TrpB-like_PALP"/>
</dbReference>
<dbReference type="InterPro" id="IPR036052">
    <property type="entry name" value="TrpB-like_PALP_sf"/>
</dbReference>
<dbReference type="NCBIfam" id="NF009057">
    <property type="entry name" value="PRK12391.1"/>
    <property type="match status" value="1"/>
</dbReference>
<dbReference type="NCBIfam" id="TIGR01415">
    <property type="entry name" value="trpB_rel"/>
    <property type="match status" value="1"/>
</dbReference>
<dbReference type="PANTHER" id="PTHR48077:SF6">
    <property type="entry name" value="TRYPTOPHAN SYNTHASE"/>
    <property type="match status" value="1"/>
</dbReference>
<dbReference type="PANTHER" id="PTHR48077">
    <property type="entry name" value="TRYPTOPHAN SYNTHASE-RELATED"/>
    <property type="match status" value="1"/>
</dbReference>
<dbReference type="Pfam" id="PF00291">
    <property type="entry name" value="PALP"/>
    <property type="match status" value="1"/>
</dbReference>
<dbReference type="PIRSF" id="PIRSF001413">
    <property type="entry name" value="Trp_syn_beta"/>
    <property type="match status" value="1"/>
</dbReference>
<dbReference type="PIRSF" id="PIRSF500824">
    <property type="entry name" value="TrpB_prok"/>
    <property type="match status" value="1"/>
</dbReference>
<dbReference type="SUPFAM" id="SSF53686">
    <property type="entry name" value="Tryptophan synthase beta subunit-like PLP-dependent enzymes"/>
    <property type="match status" value="1"/>
</dbReference>
<dbReference type="PROSITE" id="PS00168">
    <property type="entry name" value="TRP_SYNTHASE_BETA"/>
    <property type="match status" value="1"/>
</dbReference>